<reference key="1">
    <citation type="submission" date="2000-05" db="EMBL/GenBank/DDBJ databases">
        <title>Novel genes expressed in human dendritic cell.</title>
        <authorList>
            <person name="Xu X."/>
            <person name="Yang Y."/>
            <person name="Gao G."/>
            <person name="Xiao H."/>
            <person name="Chen Z."/>
            <person name="Han Z."/>
        </authorList>
    </citation>
    <scope>NUCLEOTIDE SEQUENCE [LARGE SCALE MRNA]</scope>
    <source>
        <tissue>Dendritic cell</tissue>
    </source>
</reference>
<reference key="2">
    <citation type="journal article" date="2003" name="Science">
        <title>Human chromosome 7: DNA sequence and biology.</title>
        <authorList>
            <person name="Scherer S.W."/>
            <person name="Cheung J."/>
            <person name="MacDonald J.R."/>
            <person name="Osborne L.R."/>
            <person name="Nakabayashi K."/>
            <person name="Herbrick J.-A."/>
            <person name="Carson A.R."/>
            <person name="Parker-Katiraee L."/>
            <person name="Skaug J."/>
            <person name="Khaja R."/>
            <person name="Zhang J."/>
            <person name="Hudek A.K."/>
            <person name="Li M."/>
            <person name="Haddad M."/>
            <person name="Duggan G.E."/>
            <person name="Fernandez B.A."/>
            <person name="Kanematsu E."/>
            <person name="Gentles S."/>
            <person name="Christopoulos C.C."/>
            <person name="Choufani S."/>
            <person name="Kwasnicka D."/>
            <person name="Zheng X.H."/>
            <person name="Lai Z."/>
            <person name="Nusskern D.R."/>
            <person name="Zhang Q."/>
            <person name="Gu Z."/>
            <person name="Lu F."/>
            <person name="Zeesman S."/>
            <person name="Nowaczyk M.J."/>
            <person name="Teshima I."/>
            <person name="Chitayat D."/>
            <person name="Shuman C."/>
            <person name="Weksberg R."/>
            <person name="Zackai E.H."/>
            <person name="Grebe T.A."/>
            <person name="Cox S.R."/>
            <person name="Kirkpatrick S.J."/>
            <person name="Rahman N."/>
            <person name="Friedman J.M."/>
            <person name="Heng H.H.Q."/>
            <person name="Pelicci P.G."/>
            <person name="Lo-Coco F."/>
            <person name="Belloni E."/>
            <person name="Shaffer L.G."/>
            <person name="Pober B."/>
            <person name="Morton C.C."/>
            <person name="Gusella J.F."/>
            <person name="Bruns G.A.P."/>
            <person name="Korf B.R."/>
            <person name="Quade B.J."/>
            <person name="Ligon A.H."/>
            <person name="Ferguson H."/>
            <person name="Higgins A.W."/>
            <person name="Leach N.T."/>
            <person name="Herrick S.R."/>
            <person name="Lemyre E."/>
            <person name="Farra C.G."/>
            <person name="Kim H.-G."/>
            <person name="Summers A.M."/>
            <person name="Gripp K.W."/>
            <person name="Roberts W."/>
            <person name="Szatmari P."/>
            <person name="Winsor E.J.T."/>
            <person name="Grzeschik K.-H."/>
            <person name="Teebi A."/>
            <person name="Minassian B.A."/>
            <person name="Kere J."/>
            <person name="Armengol L."/>
            <person name="Pujana M.A."/>
            <person name="Estivill X."/>
            <person name="Wilson M.D."/>
            <person name="Koop B.F."/>
            <person name="Tosi S."/>
            <person name="Moore G.E."/>
            <person name="Boright A.P."/>
            <person name="Zlotorynski E."/>
            <person name="Kerem B."/>
            <person name="Kroisel P.M."/>
            <person name="Petek E."/>
            <person name="Oscier D.G."/>
            <person name="Mould S.J."/>
            <person name="Doehner H."/>
            <person name="Doehner K."/>
            <person name="Rommens J.M."/>
            <person name="Vincent J.B."/>
            <person name="Venter J.C."/>
            <person name="Li P.W."/>
            <person name="Mural R.J."/>
            <person name="Adams M.D."/>
            <person name="Tsui L.-C."/>
        </authorList>
    </citation>
    <scope>NUCLEOTIDE SEQUENCE [LARGE SCALE GENOMIC DNA]</scope>
</reference>
<reference key="3">
    <citation type="submission" date="2005-09" db="EMBL/GenBank/DDBJ databases">
        <authorList>
            <person name="Mural R.J."/>
            <person name="Istrail S."/>
            <person name="Sutton G.G."/>
            <person name="Florea L."/>
            <person name="Halpern A.L."/>
            <person name="Mobarry C.M."/>
            <person name="Lippert R."/>
            <person name="Walenz B."/>
            <person name="Shatkay H."/>
            <person name="Dew I."/>
            <person name="Miller J.R."/>
            <person name="Flanigan M.J."/>
            <person name="Edwards N.J."/>
            <person name="Bolanos R."/>
            <person name="Fasulo D."/>
            <person name="Halldorsson B.V."/>
            <person name="Hannenhalli S."/>
            <person name="Turner R."/>
            <person name="Yooseph S."/>
            <person name="Lu F."/>
            <person name="Nusskern D.R."/>
            <person name="Shue B.C."/>
            <person name="Zheng X.H."/>
            <person name="Zhong F."/>
            <person name="Delcher A.L."/>
            <person name="Huson D.H."/>
            <person name="Kravitz S.A."/>
            <person name="Mouchard L."/>
            <person name="Reinert K."/>
            <person name="Remington K.A."/>
            <person name="Clark A.G."/>
            <person name="Waterman M.S."/>
            <person name="Eichler E.E."/>
            <person name="Adams M.D."/>
            <person name="Hunkapiller M.W."/>
            <person name="Myers E.W."/>
            <person name="Venter J.C."/>
        </authorList>
    </citation>
    <scope>NUCLEOTIDE SEQUENCE [LARGE SCALE GENOMIC DNA]</scope>
</reference>
<reference key="4">
    <citation type="journal article" date="2003" name="Nature">
        <title>The DNA sequence of human chromosome 7.</title>
        <authorList>
            <person name="Hillier L.W."/>
            <person name="Fulton R.S."/>
            <person name="Fulton L.A."/>
            <person name="Graves T.A."/>
            <person name="Pepin K.H."/>
            <person name="Wagner-McPherson C."/>
            <person name="Layman D."/>
            <person name="Maas J."/>
            <person name="Jaeger S."/>
            <person name="Walker R."/>
            <person name="Wylie K."/>
            <person name="Sekhon M."/>
            <person name="Becker M.C."/>
            <person name="O'Laughlin M.D."/>
            <person name="Schaller M.E."/>
            <person name="Fewell G.A."/>
            <person name="Delehaunty K.D."/>
            <person name="Miner T.L."/>
            <person name="Nash W.E."/>
            <person name="Cordes M."/>
            <person name="Du H."/>
            <person name="Sun H."/>
            <person name="Edwards J."/>
            <person name="Bradshaw-Cordum H."/>
            <person name="Ali J."/>
            <person name="Andrews S."/>
            <person name="Isak A."/>
            <person name="Vanbrunt A."/>
            <person name="Nguyen C."/>
            <person name="Du F."/>
            <person name="Lamar B."/>
            <person name="Courtney L."/>
            <person name="Kalicki J."/>
            <person name="Ozersky P."/>
            <person name="Bielicki L."/>
            <person name="Scott K."/>
            <person name="Holmes A."/>
            <person name="Harkins R."/>
            <person name="Harris A."/>
            <person name="Strong C.M."/>
            <person name="Hou S."/>
            <person name="Tomlinson C."/>
            <person name="Dauphin-Kohlberg S."/>
            <person name="Kozlowicz-Reilly A."/>
            <person name="Leonard S."/>
            <person name="Rohlfing T."/>
            <person name="Rock S.M."/>
            <person name="Tin-Wollam A.-M."/>
            <person name="Abbott A."/>
            <person name="Minx P."/>
            <person name="Maupin R."/>
            <person name="Strowmatt C."/>
            <person name="Latreille P."/>
            <person name="Miller N."/>
            <person name="Johnson D."/>
            <person name="Murray J."/>
            <person name="Woessner J.P."/>
            <person name="Wendl M.C."/>
            <person name="Yang S.-P."/>
            <person name="Schultz B.R."/>
            <person name="Wallis J.W."/>
            <person name="Spieth J."/>
            <person name="Bieri T.A."/>
            <person name="Nelson J.O."/>
            <person name="Berkowicz N."/>
            <person name="Wohldmann P.E."/>
            <person name="Cook L.L."/>
            <person name="Hickenbotham M.T."/>
            <person name="Eldred J."/>
            <person name="Williams D."/>
            <person name="Bedell J.A."/>
            <person name="Mardis E.R."/>
            <person name="Clifton S.W."/>
            <person name="Chissoe S.L."/>
            <person name="Marra M.A."/>
            <person name="Raymond C."/>
            <person name="Haugen E."/>
            <person name="Gillett W."/>
            <person name="Zhou Y."/>
            <person name="James R."/>
            <person name="Phelps K."/>
            <person name="Iadanoto S."/>
            <person name="Bubb K."/>
            <person name="Simms E."/>
            <person name="Levy R."/>
            <person name="Clendenning J."/>
            <person name="Kaul R."/>
            <person name="Kent W.J."/>
            <person name="Furey T.S."/>
            <person name="Baertsch R.A."/>
            <person name="Brent M.R."/>
            <person name="Keibler E."/>
            <person name="Flicek P."/>
            <person name="Bork P."/>
            <person name="Suyama M."/>
            <person name="Bailey J.A."/>
            <person name="Portnoy M.E."/>
            <person name="Torrents D."/>
            <person name="Chinwalla A.T."/>
            <person name="Gish W.R."/>
            <person name="Eddy S.R."/>
            <person name="McPherson J.D."/>
            <person name="Olson M.V."/>
            <person name="Eichler E.E."/>
            <person name="Green E.D."/>
            <person name="Waterston R.H."/>
            <person name="Wilson R.K."/>
        </authorList>
    </citation>
    <scope>NUCLEOTIDE SEQUENCE [LARGE SCALE GENOMIC DNA]</scope>
</reference>
<reference key="5">
    <citation type="journal article" date="2004" name="Genome Res.">
        <title>The status, quality, and expansion of the NIH full-length cDNA project: the Mammalian Gene Collection (MGC).</title>
        <authorList>
            <consortium name="The MGC Project Team"/>
        </authorList>
    </citation>
    <scope>NUCLEOTIDE SEQUENCE [LARGE SCALE MRNA]</scope>
    <source>
        <tissue>Eye</tissue>
    </source>
</reference>
<gene>
    <name type="primary">TMEM60</name>
    <name type="synonym">C7orf35</name>
    <name type="ORF">DC32</name>
</gene>
<feature type="chain" id="PRO_0000072581" description="Transmembrane protein 60">
    <location>
        <begin position="1"/>
        <end position="133"/>
    </location>
</feature>
<feature type="transmembrane region" description="Helical" evidence="1">
    <location>
        <begin position="5"/>
        <end position="25"/>
    </location>
</feature>
<feature type="transmembrane region" description="Helical" evidence="1">
    <location>
        <begin position="35"/>
        <end position="55"/>
    </location>
</feature>
<feature type="transmembrane region" description="Helical" evidence="1">
    <location>
        <begin position="78"/>
        <end position="98"/>
    </location>
</feature>
<feature type="transmembrane region" description="Helical" evidence="1">
    <location>
        <begin position="110"/>
        <end position="130"/>
    </location>
</feature>
<feature type="sequence variant" id="VAR_051449" description="In dbSNP:rs34580932.">
    <original>V</original>
    <variation>G</variation>
    <location>
        <position position="42"/>
    </location>
</feature>
<dbReference type="EMBL" id="AF260336">
    <property type="protein sequence ID" value="AAG44667.1"/>
    <property type="molecule type" value="mRNA"/>
</dbReference>
<dbReference type="EMBL" id="AC004955">
    <property type="protein sequence ID" value="AAP21882.1"/>
    <property type="molecule type" value="Genomic_DNA"/>
</dbReference>
<dbReference type="EMBL" id="AC004955">
    <property type="protein sequence ID" value="AAP21883.1"/>
    <property type="molecule type" value="Genomic_DNA"/>
</dbReference>
<dbReference type="EMBL" id="CH236949">
    <property type="protein sequence ID" value="EAL24196.1"/>
    <property type="molecule type" value="Genomic_DNA"/>
</dbReference>
<dbReference type="EMBL" id="CH471091">
    <property type="protein sequence ID" value="EAW77032.1"/>
    <property type="molecule type" value="Genomic_DNA"/>
</dbReference>
<dbReference type="EMBL" id="BC065930">
    <property type="protein sequence ID" value="AAH65930.1"/>
    <property type="status" value="ALT_INIT"/>
    <property type="molecule type" value="mRNA"/>
</dbReference>
<dbReference type="CCDS" id="CCDS5593.1"/>
<dbReference type="RefSeq" id="NP_116325.1">
    <property type="nucleotide sequence ID" value="NM_032936.4"/>
</dbReference>
<dbReference type="BioGRID" id="124434">
    <property type="interactions" value="91"/>
</dbReference>
<dbReference type="FunCoup" id="Q9H2L4">
    <property type="interactions" value="488"/>
</dbReference>
<dbReference type="IntAct" id="Q9H2L4">
    <property type="interactions" value="96"/>
</dbReference>
<dbReference type="STRING" id="9606.ENSP00000257663"/>
<dbReference type="TCDB" id="8.A.76.1.2">
    <property type="family name" value="the tmem203 or pf14967 (tmem203) family"/>
</dbReference>
<dbReference type="BioMuta" id="TMEM60"/>
<dbReference type="DMDM" id="47605551"/>
<dbReference type="MassIVE" id="Q9H2L4"/>
<dbReference type="PaxDb" id="9606-ENSP00000257663"/>
<dbReference type="PeptideAtlas" id="Q9H2L4"/>
<dbReference type="ProteomicsDB" id="80561"/>
<dbReference type="Antibodypedia" id="71000">
    <property type="antibodies" value="4 antibodies from 4 providers"/>
</dbReference>
<dbReference type="DNASU" id="85025"/>
<dbReference type="Ensembl" id="ENST00000257663.4">
    <property type="protein sequence ID" value="ENSP00000257663.3"/>
    <property type="gene ID" value="ENSG00000135211.6"/>
</dbReference>
<dbReference type="GeneID" id="85025"/>
<dbReference type="KEGG" id="hsa:85025"/>
<dbReference type="MANE-Select" id="ENST00000257663.4">
    <property type="protein sequence ID" value="ENSP00000257663.3"/>
    <property type="RefSeq nucleotide sequence ID" value="NM_032936.4"/>
    <property type="RefSeq protein sequence ID" value="NP_116325.1"/>
</dbReference>
<dbReference type="UCSC" id="uc003ugn.4">
    <property type="organism name" value="human"/>
</dbReference>
<dbReference type="AGR" id="HGNC:21754"/>
<dbReference type="CTD" id="85025"/>
<dbReference type="DisGeNET" id="85025"/>
<dbReference type="GeneCards" id="TMEM60"/>
<dbReference type="HGNC" id="HGNC:21754">
    <property type="gene designation" value="TMEM60"/>
</dbReference>
<dbReference type="HPA" id="ENSG00000135211">
    <property type="expression patterns" value="Low tissue specificity"/>
</dbReference>
<dbReference type="neXtProt" id="NX_Q9H2L4"/>
<dbReference type="OpenTargets" id="ENSG00000135211"/>
<dbReference type="PharmGKB" id="PA134910139"/>
<dbReference type="VEuPathDB" id="HostDB:ENSG00000135211"/>
<dbReference type="eggNOG" id="KOG3879">
    <property type="taxonomic scope" value="Eukaryota"/>
</dbReference>
<dbReference type="GeneTree" id="ENSGT00390000007283"/>
<dbReference type="HOGENOM" id="CLU_152149_0_0_1"/>
<dbReference type="InParanoid" id="Q9H2L4"/>
<dbReference type="OMA" id="RTHWNWF"/>
<dbReference type="OrthoDB" id="10258440at2759"/>
<dbReference type="PAN-GO" id="Q9H2L4">
    <property type="GO annotations" value="0 GO annotations based on evolutionary models"/>
</dbReference>
<dbReference type="PhylomeDB" id="Q9H2L4"/>
<dbReference type="TreeFam" id="TF325897"/>
<dbReference type="PathwayCommons" id="Q9H2L4"/>
<dbReference type="SignaLink" id="Q9H2L4"/>
<dbReference type="BioGRID-ORCS" id="85025">
    <property type="hits" value="14 hits in 1154 CRISPR screens"/>
</dbReference>
<dbReference type="ChiTaRS" id="TMEM60">
    <property type="organism name" value="human"/>
</dbReference>
<dbReference type="GenomeRNAi" id="85025"/>
<dbReference type="Pharos" id="Q9H2L4">
    <property type="development level" value="Tdark"/>
</dbReference>
<dbReference type="PRO" id="PR:Q9H2L4"/>
<dbReference type="Proteomes" id="UP000005640">
    <property type="component" value="Chromosome 7"/>
</dbReference>
<dbReference type="RNAct" id="Q9H2L4">
    <property type="molecule type" value="protein"/>
</dbReference>
<dbReference type="Bgee" id="ENSG00000135211">
    <property type="expression patterns" value="Expressed in secondary oocyte and 185 other cell types or tissues"/>
</dbReference>
<dbReference type="GO" id="GO:0016020">
    <property type="term" value="C:membrane"/>
    <property type="evidence" value="ECO:0007669"/>
    <property type="project" value="UniProtKB-SubCell"/>
</dbReference>
<dbReference type="InterPro" id="IPR019396">
    <property type="entry name" value="TM_Fragile-X-F-assoc"/>
</dbReference>
<dbReference type="PANTHER" id="PTHR13568">
    <property type="entry name" value="FAM11A, B PROTEIN"/>
    <property type="match status" value="1"/>
</dbReference>
<dbReference type="PANTHER" id="PTHR13568:SF4">
    <property type="entry name" value="TRANSMEMBRANE PROTEIN 60"/>
    <property type="match status" value="1"/>
</dbReference>
<dbReference type="Pfam" id="PF10269">
    <property type="entry name" value="Tmemb_185A"/>
    <property type="match status" value="1"/>
</dbReference>
<proteinExistence type="evidence at protein level"/>
<accession>Q9H2L4</accession>
<accession>A4D1C3</accession>
<accession>Q86UM0</accession>
<name>TMM60_HUMAN</name>
<sequence length="133" mass="15500">MRMSLAQRVLLTWLFTLLFLIMLVLKLDEKAPWNWFLIFIPVWIFDTILLVLLIVKMAGRCKSGFDPRHGSHNIKKKAWYLIAMLLKLAFCLALCAKLEQFTTMNLSYVFIPLWALLAGALTELGYNVFFVRD</sequence>
<evidence type="ECO:0000255" key="1"/>
<evidence type="ECO:0000305" key="2"/>
<comment type="interaction">
    <interactant intactId="EBI-2852148">
        <id>Q9H2L4</id>
    </interactant>
    <interactant intactId="EBI-19125216">
        <id>Q86WK6</id>
        <label>AMIGO1</label>
    </interactant>
    <organismsDiffer>false</organismsDiffer>
    <experiments>3</experiments>
</comment>
<comment type="interaction">
    <interactant intactId="EBI-2852148">
        <id>Q9H2L4</id>
    </interactant>
    <interactant intactId="EBI-7054139">
        <id>Q68DC2</id>
        <label>ANKS6</label>
    </interactant>
    <organismsDiffer>false</organismsDiffer>
    <experiments>3</experiments>
</comment>
<comment type="interaction">
    <interactant intactId="EBI-2852148">
        <id>Q9H2L4</id>
    </interactant>
    <interactant intactId="EBI-4290634">
        <id>Q9BQE5</id>
        <label>APOL2</label>
    </interactant>
    <organismsDiffer>false</organismsDiffer>
    <experiments>3</experiments>
</comment>
<comment type="interaction">
    <interactant intactId="EBI-2852148">
        <id>Q9H2L4</id>
    </interactant>
    <interactant intactId="EBI-12701138">
        <id>P41181</id>
        <label>AQP2</label>
    </interactant>
    <organismsDiffer>false</organismsDiffer>
    <experiments>3</experiments>
</comment>
<comment type="interaction">
    <interactant intactId="EBI-2852148">
        <id>Q9H2L4</id>
    </interactant>
    <interactant intactId="EBI-13059134">
        <id>Q13520</id>
        <label>AQP6</label>
    </interactant>
    <organismsDiffer>false</organismsDiffer>
    <experiments>3</experiments>
</comment>
<comment type="interaction">
    <interactant intactId="EBI-2852148">
        <id>Q9H2L4</id>
    </interactant>
    <interactant intactId="EBI-12808270">
        <id>P07307-3</id>
        <label>ASGR2</label>
    </interactant>
    <organismsDiffer>false</organismsDiffer>
    <experiments>3</experiments>
</comment>
<comment type="interaction">
    <interactant intactId="EBI-2852148">
        <id>Q9H2L4</id>
    </interactant>
    <interactant intactId="EBI-19947314">
        <id>Q8NFU1</id>
        <label>BEST2</label>
    </interactant>
    <organismsDiffer>false</organismsDiffer>
    <experiments>3</experiments>
</comment>
<comment type="interaction">
    <interactant intactId="EBI-2852148">
        <id>Q9H2L4</id>
    </interactant>
    <interactant intactId="EBI-700794">
        <id>Q13323</id>
        <label>BIK</label>
    </interactant>
    <organismsDiffer>false</organismsDiffer>
    <experiments>3</experiments>
</comment>
<comment type="interaction">
    <interactant intactId="EBI-2852148">
        <id>Q9H2L4</id>
    </interactant>
    <interactant intactId="EBI-7996695">
        <id>Q8WZ55</id>
        <label>BSND</label>
    </interactant>
    <organismsDiffer>false</organismsDiffer>
    <experiments>3</experiments>
</comment>
<comment type="interaction">
    <interactant intactId="EBI-2852148">
        <id>Q9H2L4</id>
    </interactant>
    <interactant intactId="EBI-10320732">
        <id>Q9UGN4</id>
        <label>CD300A</label>
    </interactant>
    <organismsDiffer>false</organismsDiffer>
    <experiments>3</experiments>
</comment>
<comment type="interaction">
    <interactant intactId="EBI-2852148">
        <id>Q9H2L4</id>
    </interactant>
    <interactant intactId="EBI-6657396">
        <id>P19397</id>
        <label>CD53</label>
    </interactant>
    <organismsDiffer>false</organismsDiffer>
    <experiments>3</experiments>
</comment>
<comment type="interaction">
    <interactant intactId="EBI-2852148">
        <id>Q9H2L4</id>
    </interactant>
    <interactant intactId="EBI-12222807">
        <id>P04233-2</id>
        <label>CD74</label>
    </interactant>
    <organismsDiffer>false</organismsDiffer>
    <experiments>3</experiments>
</comment>
<comment type="interaction">
    <interactant intactId="EBI-2852148">
        <id>Q9H2L4</id>
    </interactant>
    <interactant intactId="EBI-740744">
        <id>O95471</id>
        <label>CLDN7</label>
    </interactant>
    <organismsDiffer>false</organismsDiffer>
    <experiments>3</experiments>
</comment>
<comment type="interaction">
    <interactant intactId="EBI-2852148">
        <id>Q9H2L4</id>
    </interactant>
    <interactant intactId="EBI-2835940">
        <id>P34972</id>
        <label>CNR2</label>
    </interactant>
    <organismsDiffer>false</organismsDiffer>
    <experiments>3</experiments>
</comment>
<comment type="interaction">
    <interactant intactId="EBI-2852148">
        <id>Q9H2L4</id>
    </interactant>
    <interactant intactId="EBI-18013275">
        <id>Q7Z7G2</id>
        <label>CPLX4</label>
    </interactant>
    <organismsDiffer>false</organismsDiffer>
    <experiments>3</experiments>
</comment>
<comment type="interaction">
    <interactant intactId="EBI-2852148">
        <id>Q9H2L4</id>
    </interactant>
    <interactant intactId="EBI-1046040">
        <id>P00387</id>
        <label>CYB5R3</label>
    </interactant>
    <organismsDiffer>false</organismsDiffer>
    <experiments>3</experiments>
</comment>
<comment type="interaction">
    <interactant intactId="EBI-2852148">
        <id>Q9H2L4</id>
    </interactant>
    <interactant intactId="EBI-3915253">
        <id>Q15125</id>
        <label>EBP</label>
    </interactant>
    <organismsDiffer>false</organismsDiffer>
    <experiments>3</experiments>
</comment>
<comment type="interaction">
    <interactant intactId="EBI-2852148">
        <id>Q9H2L4</id>
    </interactant>
    <interactant intactId="EBI-529425">
        <id>Q92838</id>
        <label>EDA</label>
    </interactant>
    <organismsDiffer>false</organismsDiffer>
    <experiments>3</experiments>
</comment>
<comment type="interaction">
    <interactant intactId="EBI-2852148">
        <id>Q9H2L4</id>
    </interactant>
    <interactant intactId="EBI-781551">
        <id>Q9Y282</id>
        <label>ERGIC3</label>
    </interactant>
    <organismsDiffer>false</organismsDiffer>
    <experiments>3</experiments>
</comment>
<comment type="interaction">
    <interactant intactId="EBI-2852148">
        <id>Q9H2L4</id>
    </interactant>
    <interactant intactId="EBI-17973325">
        <id>P60508</id>
        <label>ERVFRD-1</label>
    </interactant>
    <organismsDiffer>false</organismsDiffer>
    <experiments>3</experiments>
</comment>
<comment type="interaction">
    <interactant intactId="EBI-2852148">
        <id>Q9H2L4</id>
    </interactant>
    <interactant intactId="EBI-17640610">
        <id>P34910-2</id>
        <label>EVI2B</label>
    </interactant>
    <organismsDiffer>false</organismsDiffer>
    <experiments>3</experiments>
</comment>
<comment type="interaction">
    <interactant intactId="EBI-2852148">
        <id>Q9H2L4</id>
    </interactant>
    <interactant intactId="EBI-18304435">
        <id>Q5JX71</id>
        <label>FAM209A</label>
    </interactant>
    <organismsDiffer>false</organismsDiffer>
    <experiments>3</experiments>
</comment>
<comment type="interaction">
    <interactant intactId="EBI-2852148">
        <id>Q9H2L4</id>
    </interactant>
    <interactant intactId="EBI-2833872">
        <id>O15552</id>
        <label>FFAR2</label>
    </interactant>
    <organismsDiffer>false</organismsDiffer>
    <experiments>3</experiments>
</comment>
<comment type="interaction">
    <interactant intactId="EBI-2852148">
        <id>Q9H2L4</id>
    </interactant>
    <interactant intactId="EBI-12142257">
        <id>Q8TBE3</id>
        <label>FNDC9</label>
    </interactant>
    <organismsDiffer>false</organismsDiffer>
    <experiments>3</experiments>
</comment>
<comment type="interaction">
    <interactant intactId="EBI-2852148">
        <id>Q9H2L4</id>
    </interactant>
    <interactant intactId="EBI-17458373">
        <id>P48165</id>
        <label>GJA8</label>
    </interactant>
    <organismsDiffer>false</organismsDiffer>
    <experiments>3</experiments>
</comment>
<comment type="interaction">
    <interactant intactId="EBI-2852148">
        <id>Q9H2L4</id>
    </interactant>
    <interactant intactId="EBI-3909454">
        <id>O95377</id>
        <label>GJB5</label>
    </interactant>
    <organismsDiffer>false</organismsDiffer>
    <experiments>3</experiments>
</comment>
<comment type="interaction">
    <interactant intactId="EBI-2852148">
        <id>Q9H2L4</id>
    </interactant>
    <interactant intactId="EBI-13345609">
        <id>O95452</id>
        <label>GJB6</label>
    </interactant>
    <organismsDiffer>false</organismsDiffer>
    <experiments>3</experiments>
</comment>
<comment type="interaction">
    <interactant intactId="EBI-2852148">
        <id>Q9H2L4</id>
    </interactant>
    <interactant intactId="EBI-3917143">
        <id>Q5T7V8</id>
        <label>GORAB</label>
    </interactant>
    <organismsDiffer>false</organismsDiffer>
    <experiments>3</experiments>
</comment>
<comment type="interaction">
    <interactant intactId="EBI-2852148">
        <id>Q9H2L4</id>
    </interactant>
    <interactant intactId="EBI-13345167">
        <id>Q8TDT2</id>
        <label>GPR152</label>
    </interactant>
    <organismsDiffer>false</organismsDiffer>
    <experiments>3</experiments>
</comment>
<comment type="interaction">
    <interactant intactId="EBI-2852148">
        <id>Q9H2L4</id>
    </interactant>
    <interactant intactId="EBI-18076404">
        <id>O15529</id>
        <label>GPR42</label>
    </interactant>
    <organismsDiffer>false</organismsDiffer>
    <experiments>3</experiments>
</comment>
<comment type="interaction">
    <interactant intactId="EBI-2852148">
        <id>Q9H2L4</id>
    </interactant>
    <interactant intactId="EBI-12808020">
        <id>Q9BZJ8</id>
        <label>GPR61</label>
    </interactant>
    <organismsDiffer>false</organismsDiffer>
    <experiments>3</experiments>
</comment>
<comment type="interaction">
    <interactant intactId="EBI-2852148">
        <id>Q9H2L4</id>
    </interactant>
    <interactant intactId="EBI-11721746">
        <id>Q8TED1</id>
        <label>GPX8</label>
    </interactant>
    <organismsDiffer>false</organismsDiffer>
    <experiments>3</experiments>
</comment>
<comment type="interaction">
    <interactant intactId="EBI-2852148">
        <id>Q9H2L4</id>
    </interactant>
    <interactant intactId="EBI-2868124">
        <id>Q9BSE4</id>
        <label>HERPUD2</label>
    </interactant>
    <organismsDiffer>false</organismsDiffer>
    <experiments>3</experiments>
</comment>
<comment type="interaction">
    <interactant intactId="EBI-2852148">
        <id>Q9H2L4</id>
    </interactant>
    <interactant intactId="EBI-11427100">
        <id>P31937</id>
        <label>HIBADH</label>
    </interactant>
    <organismsDiffer>false</organismsDiffer>
    <experiments>3</experiments>
</comment>
<comment type="interaction">
    <interactant intactId="EBI-2852148">
        <id>Q9H2L4</id>
    </interactant>
    <interactant intactId="EBI-1052304">
        <id>Q8NBQ5</id>
        <label>HSD17B11</label>
    </interactant>
    <organismsDiffer>false</organismsDiffer>
    <experiments>3</experiments>
</comment>
<comment type="interaction">
    <interactant intactId="EBI-2852148">
        <id>Q9H2L4</id>
    </interactant>
    <interactant intactId="EBI-18053395">
        <id>Q7Z5P4</id>
        <label>HSD17B13</label>
    </interactant>
    <organismsDiffer>false</organismsDiffer>
    <experiments>3</experiments>
</comment>
<comment type="interaction">
    <interactant intactId="EBI-2852148">
        <id>Q9H2L4</id>
    </interactant>
    <interactant intactId="EBI-3905457">
        <id>P38484</id>
        <label>IFNGR2</label>
    </interactant>
    <organismsDiffer>false</organismsDiffer>
    <experiments>3</experiments>
</comment>
<comment type="interaction">
    <interactant intactId="EBI-2852148">
        <id>Q9H2L4</id>
    </interactant>
    <interactant intactId="EBI-1031656">
        <id>Q13651</id>
        <label>IL10RA</label>
    </interactant>
    <organismsDiffer>false</organismsDiffer>
    <experiments>3</experiments>
</comment>
<comment type="interaction">
    <interactant intactId="EBI-2852148">
        <id>Q9H2L4</id>
    </interactant>
    <interactant intactId="EBI-80490">
        <id>P16871</id>
        <label>IL7R</label>
    </interactant>
    <organismsDiffer>false</organismsDiffer>
    <experiments>3</experiments>
</comment>
<comment type="interaction">
    <interactant intactId="EBI-2852148">
        <id>Q9H2L4</id>
    </interactant>
    <interactant intactId="EBI-3934936">
        <id>O95279</id>
        <label>KCNK5</label>
    </interactant>
    <organismsDiffer>false</organismsDiffer>
    <experiments>3</experiments>
</comment>
<comment type="interaction">
    <interactant intactId="EBI-2852148">
        <id>Q9H2L4</id>
    </interactant>
    <interactant intactId="EBI-2866116">
        <id>Q8IYS2</id>
        <label>KIAA2013</label>
    </interactant>
    <organismsDiffer>false</organismsDiffer>
    <experiments>3</experiments>
</comment>
<comment type="interaction">
    <interactant intactId="EBI-2852148">
        <id>Q9H2L4</id>
    </interactant>
    <interactant intactId="EBI-750776">
        <id>O95214</id>
        <label>LEPROTL1</label>
    </interactant>
    <organismsDiffer>false</organismsDiffer>
    <experiments>3</experiments>
</comment>
<comment type="interaction">
    <interactant intactId="EBI-2852148">
        <id>Q9H2L4</id>
    </interactant>
    <interactant intactId="EBI-17490413">
        <id>A8MZ59</id>
        <label>LEUTX</label>
    </interactant>
    <organismsDiffer>false</organismsDiffer>
    <experiments>3</experiments>
</comment>
<comment type="interaction">
    <interactant intactId="EBI-2852148">
        <id>Q9H2L4</id>
    </interactant>
    <interactant intactId="EBI-2820517">
        <id>Q8TAF8</id>
        <label>LHFPL5</label>
    </interactant>
    <organismsDiffer>false</organismsDiffer>
    <experiments>3</experiments>
</comment>
<comment type="interaction">
    <interactant intactId="EBI-2852148">
        <id>Q9H2L4</id>
    </interactant>
    <interactant intactId="EBI-17775622">
        <id>Q96PB8</id>
        <label>LRRC3B</label>
    </interactant>
    <organismsDiffer>false</organismsDiffer>
    <experiments>3</experiments>
</comment>
<comment type="interaction">
    <interactant intactId="EBI-2852148">
        <id>Q9H2L4</id>
    </interactant>
    <interactant intactId="EBI-358888">
        <id>Q96AG4</id>
        <label>LRRC59</label>
    </interactant>
    <organismsDiffer>false</organismsDiffer>
    <experiments>3</experiments>
</comment>
<comment type="interaction">
    <interactant intactId="EBI-2852148">
        <id>Q9H2L4</id>
    </interactant>
    <interactant intactId="EBI-11956541">
        <id>Q9GZY8-5</id>
        <label>MFF</label>
    </interactant>
    <organismsDiffer>false</organismsDiffer>
    <experiments>3</experiments>
</comment>
<comment type="interaction">
    <interactant intactId="EBI-2852148">
        <id>Q9H2L4</id>
    </interactant>
    <interactant intactId="EBI-724754">
        <id>O14880</id>
        <label>MGST3</label>
    </interactant>
    <organismsDiffer>false</organismsDiffer>
    <experiments>3</experiments>
</comment>
<comment type="interaction">
    <interactant intactId="EBI-2852148">
        <id>Q9H2L4</id>
    </interactant>
    <interactant intactId="EBI-17873222">
        <id>Q15546</id>
        <label>MMD</label>
    </interactant>
    <organismsDiffer>false</organismsDiffer>
    <experiments>3</experiments>
</comment>
<comment type="interaction">
    <interactant intactId="EBI-2852148">
        <id>Q9H2L4</id>
    </interactant>
    <interactant intactId="EBI-6163737">
        <id>Q8N4V1</id>
        <label>MMGT1</label>
    </interactant>
    <organismsDiffer>false</organismsDiffer>
    <experiments>3</experiments>
</comment>
<comment type="interaction">
    <interactant intactId="EBI-2852148">
        <id>Q9H2L4</id>
    </interactant>
    <interactant intactId="EBI-2559100">
        <id>O75459</id>
        <label>PAGE1</label>
    </interactant>
    <organismsDiffer>false</organismsDiffer>
    <experiments>3</experiments>
</comment>
<comment type="interaction">
    <interactant intactId="EBI-2852148">
        <id>Q9H2L4</id>
    </interactant>
    <interactant intactId="EBI-1050125">
        <id>O15173</id>
        <label>PGRMC2</label>
    </interactant>
    <organismsDiffer>false</organismsDiffer>
    <experiments>3</experiments>
</comment>
<comment type="interaction">
    <interactant intactId="EBI-2852148">
        <id>Q9H2L4</id>
    </interactant>
    <interactant intactId="EBI-12810028">
        <id>Q6UXB8</id>
        <label>PI16</label>
    </interactant>
    <organismsDiffer>false</organismsDiffer>
    <experiments>3</experiments>
</comment>
<comment type="interaction">
    <interactant intactId="EBI-2852148">
        <id>Q9H2L4</id>
    </interactant>
    <interactant intactId="EBI-11337973">
        <id>Q9BRK0</id>
        <label>REEP2</label>
    </interactant>
    <organismsDiffer>false</organismsDiffer>
    <experiments>3</experiments>
</comment>
<comment type="interaction">
    <interactant intactId="EBI-2852148">
        <id>Q9H2L4</id>
    </interactant>
    <interactant intactId="EBI-7545592">
        <id>Q9H6H4</id>
        <label>REEP4</label>
    </interactant>
    <organismsDiffer>false</organismsDiffer>
    <experiments>3</experiments>
</comment>
<comment type="interaction">
    <interactant intactId="EBI-2852148">
        <id>Q9H2L4</id>
    </interactant>
    <interactant intactId="EBI-10192441">
        <id>Q86VR2</id>
        <label>RETREG3</label>
    </interactant>
    <organismsDiffer>false</organismsDiffer>
    <experiments>3</experiments>
</comment>
<comment type="interaction">
    <interactant intactId="EBI-2852148">
        <id>Q9H2L4</id>
    </interactant>
    <interactant intactId="EBI-15853497">
        <id>Q9UBD6</id>
        <label>RHCG</label>
    </interactant>
    <organismsDiffer>false</organismsDiffer>
    <experiments>3</experiments>
</comment>
<comment type="interaction">
    <interactant intactId="EBI-2852148">
        <id>Q9H2L4</id>
    </interactant>
    <interactant intactId="EBI-18397230">
        <id>Q6P5S7</id>
        <label>RNASEK</label>
    </interactant>
    <organismsDiffer>false</organismsDiffer>
    <experiments>3</experiments>
</comment>
<comment type="interaction">
    <interactant intactId="EBI-2852148">
        <id>Q9H2L4</id>
    </interactant>
    <interactant intactId="EBI-3920694">
        <id>Q9NR31</id>
        <label>SAR1A</label>
    </interactant>
    <organismsDiffer>false</organismsDiffer>
    <experiments>3</experiments>
</comment>
<comment type="interaction">
    <interactant intactId="EBI-2852148">
        <id>Q9H2L4</id>
    </interactant>
    <interactant intactId="EBI-17247926">
        <id>Q9NY72</id>
        <label>SCN3B</label>
    </interactant>
    <organismsDiffer>false</organismsDiffer>
    <experiments>3</experiments>
</comment>
<comment type="interaction">
    <interactant intactId="EBI-2852148">
        <id>Q9H2L4</id>
    </interactant>
    <interactant intactId="EBI-3923031">
        <id>Q14973</id>
        <label>SLC10A1</label>
    </interactant>
    <organismsDiffer>false</organismsDiffer>
    <experiments>3</experiments>
</comment>
<comment type="interaction">
    <interactant intactId="EBI-2852148">
        <id>Q9H2L4</id>
    </interactant>
    <interactant intactId="EBI-18159983">
        <id>Q3KNW5</id>
        <label>SLC10A6</label>
    </interactant>
    <organismsDiffer>false</organismsDiffer>
    <experiments>3</experiments>
</comment>
<comment type="interaction">
    <interactant intactId="EBI-2852148">
        <id>Q9H2L4</id>
    </interactant>
    <interactant intactId="EBI-12808018">
        <id>Q9UKG4</id>
        <label>SLC13A4</label>
    </interactant>
    <organismsDiffer>false</organismsDiffer>
    <experiments>3</experiments>
</comment>
<comment type="interaction">
    <interactant intactId="EBI-2852148">
        <id>Q9H2L4</id>
    </interactant>
    <interactant intactId="EBI-17595455">
        <id>P54219-3</id>
        <label>SLC18A1</label>
    </interactant>
    <organismsDiffer>false</organismsDiffer>
    <experiments>3</experiments>
</comment>
<comment type="interaction">
    <interactant intactId="EBI-2852148">
        <id>Q9H2L4</id>
    </interactant>
    <interactant intactId="EBI-8644112">
        <id>Q9BRI3</id>
        <label>SLC30A2</label>
    </interactant>
    <organismsDiffer>false</organismsDiffer>
    <experiments>5</experiments>
</comment>
<comment type="interaction">
    <interactant intactId="EBI-2852148">
        <id>Q9H2L4</id>
    </interactant>
    <interactant intactId="EBI-13918058">
        <id>O14863</id>
        <label>SLC30A4</label>
    </interactant>
    <organismsDiffer>false</organismsDiffer>
    <experiments>3</experiments>
</comment>
<comment type="interaction">
    <interactant intactId="EBI-2852148">
        <id>Q9H2L4</id>
    </interactant>
    <interactant intactId="EBI-13389236">
        <id>Q7Z769</id>
        <label>SLC35E3</label>
    </interactant>
    <organismsDiffer>false</organismsDiffer>
    <experiments>3</experiments>
</comment>
<comment type="interaction">
    <interactant intactId="EBI-2852148">
        <id>Q9H2L4</id>
    </interactant>
    <interactant intactId="EBI-9978441">
        <id>Q9H2H9</id>
        <label>SLC38A1</label>
    </interactant>
    <organismsDiffer>false</organismsDiffer>
    <experiments>3</experiments>
</comment>
<comment type="interaction">
    <interactant intactId="EBI-2852148">
        <id>Q9H2L4</id>
    </interactant>
    <interactant intactId="EBI-726491">
        <id>Q9NY26</id>
        <label>SLC39A1</label>
    </interactant>
    <organismsDiffer>false</organismsDiffer>
    <experiments>3</experiments>
</comment>
<comment type="interaction">
    <interactant intactId="EBI-2852148">
        <id>Q9H2L4</id>
    </interactant>
    <interactant intactId="EBI-12898013">
        <id>Q9NP94</id>
        <label>SLC39A2</label>
    </interactant>
    <organismsDiffer>false</organismsDiffer>
    <experiments>3</experiments>
</comment>
<comment type="interaction">
    <interactant intactId="EBI-2852148">
        <id>Q9H2L4</id>
    </interactant>
    <interactant intactId="EBI-7576138">
        <id>P02730</id>
        <label>SLC4A1</label>
    </interactant>
    <organismsDiffer>false</organismsDiffer>
    <experiments>3</experiments>
</comment>
<comment type="interaction">
    <interactant intactId="EBI-2852148">
        <id>Q9H2L4</id>
    </interactant>
    <interactant intactId="EBI-11343466">
        <id>Q9H2J7</id>
        <label>SLC6A15</label>
    </interactant>
    <organismsDiffer>false</organismsDiffer>
    <experiments>3</experiments>
</comment>
<comment type="interaction">
    <interactant intactId="EBI-2852148">
        <id>Q9H2L4</id>
    </interactant>
    <interactant intactId="EBI-13292283">
        <id>Q9UHI5</id>
        <label>SLC7A8</label>
    </interactant>
    <organismsDiffer>false</organismsDiffer>
    <experiments>3</experiments>
</comment>
<comment type="interaction">
    <interactant intactId="EBI-2852148">
        <id>Q9H2L4</id>
    </interactant>
    <interactant intactId="EBI-10819434">
        <id>Q9NPE6</id>
        <label>SPAG4</label>
    </interactant>
    <organismsDiffer>false</organismsDiffer>
    <experiments>3</experiments>
</comment>
<comment type="interaction">
    <interactant intactId="EBI-2852148">
        <id>Q9H2L4</id>
    </interactant>
    <interactant intactId="EBI-17848320">
        <id>Q6ZMD2-2</id>
        <label>SPNS3</label>
    </interactant>
    <organismsDiffer>false</organismsDiffer>
    <experiments>3</experiments>
</comment>
<comment type="interaction">
    <interactant intactId="EBI-2852148">
        <id>Q9H2L4</id>
    </interactant>
    <interactant intactId="EBI-17280858">
        <id>Q8WWF3</id>
        <label>SSMEM1</label>
    </interactant>
    <organismsDiffer>false</organismsDiffer>
    <experiments>3</experiments>
</comment>
<comment type="interaction">
    <interactant intactId="EBI-2852148">
        <id>Q9H2L4</id>
    </interactant>
    <interactant intactId="EBI-1211440">
        <id>P27105</id>
        <label>STOM</label>
    </interactant>
    <organismsDiffer>false</organismsDiffer>
    <experiments>3</experiments>
</comment>
<comment type="interaction">
    <interactant intactId="EBI-2852148">
        <id>Q9H2L4</id>
    </interactant>
    <interactant intactId="EBI-712466">
        <id>Q16623</id>
        <label>STX1A</label>
    </interactant>
    <organismsDiffer>false</organismsDiffer>
    <experiments>3</experiments>
</comment>
<comment type="interaction">
    <interactant intactId="EBI-2852148">
        <id>Q9H2L4</id>
    </interactant>
    <interactant intactId="EBI-524909">
        <id>P21579</id>
        <label>SYT1</label>
    </interactant>
    <organismsDiffer>false</organismsDiffer>
    <experiments>3</experiments>
</comment>
<comment type="interaction">
    <interactant intactId="EBI-2852148">
        <id>Q9H2L4</id>
    </interactant>
    <interactant intactId="EBI-726691">
        <id>Q8WY91</id>
        <label>THAP4</label>
    </interactant>
    <organismsDiffer>false</organismsDiffer>
    <experiments>3</experiments>
</comment>
<comment type="interaction">
    <interactant intactId="EBI-2852148">
        <id>Q9H2L4</id>
    </interactant>
    <interactant intactId="EBI-12947623">
        <id>Q96MV1</id>
        <label>TLCD4</label>
    </interactant>
    <organismsDiffer>false</organismsDiffer>
    <experiments>3</experiments>
</comment>
<comment type="interaction">
    <interactant intactId="EBI-2852148">
        <id>Q9H2L4</id>
    </interactant>
    <interactant intactId="EBI-12821895">
        <id>Q8N6Q1</id>
        <label>TMCO5A</label>
    </interactant>
    <organismsDiffer>false</organismsDiffer>
    <experiments>3</experiments>
</comment>
<comment type="interaction">
    <interactant intactId="EBI-2852148">
        <id>Q9H2L4</id>
    </interactant>
    <interactant intactId="EBI-1056827">
        <id>Q9BVK6</id>
        <label>TMED9</label>
    </interactant>
    <organismsDiffer>false</organismsDiffer>
    <experiments>3</experiments>
</comment>
<comment type="interaction">
    <interactant intactId="EBI-2852148">
        <id>Q9H2L4</id>
    </interactant>
    <interactant intactId="EBI-7238458">
        <id>Q8IV31</id>
        <label>TMEM139</label>
    </interactant>
    <organismsDiffer>false</organismsDiffer>
    <experiments>3</experiments>
</comment>
<comment type="interaction">
    <interactant intactId="EBI-2852148">
        <id>Q9H2L4</id>
    </interactant>
    <interactant intactId="EBI-8638294">
        <id>Q9NUH8</id>
        <label>TMEM14B</label>
    </interactant>
    <organismsDiffer>false</organismsDiffer>
    <experiments>3</experiments>
</comment>
<comment type="interaction">
    <interactant intactId="EBI-2852148">
        <id>Q9H2L4</id>
    </interactant>
    <interactant intactId="EBI-12274070">
        <id>Q969S6</id>
        <label>TMEM203</label>
    </interactant>
    <organismsDiffer>false</organismsDiffer>
    <experiments>3</experiments>
</comment>
<comment type="interaction">
    <interactant intactId="EBI-2852148">
        <id>Q9H2L4</id>
    </interactant>
    <interactant intactId="EBI-10982110">
        <id>Q96Q45-2</id>
        <label>TMEM237</label>
    </interactant>
    <organismsDiffer>false</organismsDiffer>
    <experiments>3</experiments>
</comment>
<comment type="interaction">
    <interactant intactId="EBI-2852148">
        <id>Q9H2L4</id>
    </interactant>
    <interactant intactId="EBI-3923061">
        <id>Q96B21</id>
        <label>TMEM45B</label>
    </interactant>
    <organismsDiffer>false</organismsDiffer>
    <experiments>3</experiments>
</comment>
<comment type="interaction">
    <interactant intactId="EBI-2852148">
        <id>Q9H2L4</id>
    </interactant>
    <interactant intactId="EBI-18178701">
        <id>Q4KMG9</id>
        <label>TMEM52B</label>
    </interactant>
    <organismsDiffer>false</organismsDiffer>
    <experiments>3</experiments>
</comment>
<comment type="interaction">
    <interactant intactId="EBI-2852148">
        <id>Q9H2L4</id>
    </interactant>
    <interactant intactId="EBI-2548832">
        <id>Q8N661</id>
        <label>TMEM86B</label>
    </interactant>
    <organismsDiffer>false</organismsDiffer>
    <experiments>3</experiments>
</comment>
<comment type="interaction">
    <interactant intactId="EBI-2852148">
        <id>Q9H2L4</id>
    </interactant>
    <interactant intactId="EBI-723976">
        <id>Q9P0T7</id>
        <label>TMEM9</label>
    </interactant>
    <organismsDiffer>false</organismsDiffer>
    <experiments>3</experiments>
</comment>
<comment type="interaction">
    <interactant intactId="EBI-2852148">
        <id>Q9H2L4</id>
    </interactant>
    <interactant intactId="EBI-11724433">
        <id>Q6ZT21</id>
        <label>TMPPE</label>
    </interactant>
    <organismsDiffer>false</organismsDiffer>
    <experiments>3</experiments>
</comment>
<comment type="interaction">
    <interactant intactId="EBI-2852148">
        <id>Q9H2L4</id>
    </interactant>
    <interactant intactId="EBI-12345267">
        <id>O15393-2</id>
        <label>TMPRSS2</label>
    </interactant>
    <organismsDiffer>false</organismsDiffer>
    <experiments>3</experiments>
</comment>
<comment type="interaction">
    <interactant intactId="EBI-2852148">
        <id>Q9H2L4</id>
    </interactant>
    <interactant intactId="EBI-17671298">
        <id>Q9H313-4</id>
        <label>TTYH1</label>
    </interactant>
    <organismsDiffer>false</organismsDiffer>
    <experiments>3</experiments>
</comment>
<comment type="interaction">
    <interactant intactId="EBI-2852148">
        <id>Q9H2L4</id>
    </interactant>
    <interactant intactId="EBI-1055364">
        <id>Q3ZAQ7</id>
        <label>VMA21</label>
    </interactant>
    <organismsDiffer>false</organismsDiffer>
    <experiments>3</experiments>
</comment>
<comment type="subcellular location">
    <subcellularLocation>
        <location evidence="2">Membrane</location>
        <topology evidence="2">Multi-pass membrane protein</topology>
    </subcellularLocation>
</comment>
<comment type="sequence caution" evidence="2">
    <conflict type="erroneous initiation">
        <sequence resource="EMBL-CDS" id="AAH65930"/>
    </conflict>
</comment>
<keyword id="KW-0472">Membrane</keyword>
<keyword id="KW-1185">Reference proteome</keyword>
<keyword id="KW-0812">Transmembrane</keyword>
<keyword id="KW-1133">Transmembrane helix</keyword>
<organism>
    <name type="scientific">Homo sapiens</name>
    <name type="common">Human</name>
    <dbReference type="NCBI Taxonomy" id="9606"/>
    <lineage>
        <taxon>Eukaryota</taxon>
        <taxon>Metazoa</taxon>
        <taxon>Chordata</taxon>
        <taxon>Craniata</taxon>
        <taxon>Vertebrata</taxon>
        <taxon>Euteleostomi</taxon>
        <taxon>Mammalia</taxon>
        <taxon>Eutheria</taxon>
        <taxon>Euarchontoglires</taxon>
        <taxon>Primates</taxon>
        <taxon>Haplorrhini</taxon>
        <taxon>Catarrhini</taxon>
        <taxon>Hominidae</taxon>
        <taxon>Homo</taxon>
    </lineage>
</organism>
<protein>
    <recommendedName>
        <fullName>Transmembrane protein 60</fullName>
    </recommendedName>
</protein>